<sequence>MDNCDQDASFRLSHIKEEVKPDISQLNDSNNSSFSPKAESPVPFMQAMSMVHVLPGSNSASSNNNSAGDAQMAQAPNSAGGSAAAAVQQQYPPNHPLSGSKHLCSICGDRASGKHYGVYSCEGCKGFFKRTVRKDLTYACRENRNCIIDKRQRNRCQYCRYQKCLTCGMKREAVQEERQRGARNAAGRLSASGGGSSGPGSVGGSSSQGGGGGGGVSGGMGSGNGSDDFMTNSVSRDFSIERIIEAEQRAETQCGDRALTFLRVGPYSTVQPDYKGAVSALCQVVNKQLFQMVEYARMMPHFAQVPLDDQVILLKAAWIELLIANVAWCSIVSLDDGGAGGGGGGLGHDGSFERRSPGLQPQQLFLNQSFSYHRNSAIKAGVSAIFDRILSELSVKMKRLNLDRRELSCLKAIILYNPDIRGIKSRAEIEMCREKVYACLDEHCRLEHPGDDGRFAQLLLRLPALRSISLKCQDHLFLFRITSDRPLEELFLEQLEAPPPPGLAMKLE</sequence>
<protein>
    <recommendedName>
        <fullName>Protein ultraspiracle</fullName>
    </recommendedName>
    <alternativeName>
        <fullName>Chorion factor 1</fullName>
    </alternativeName>
    <alternativeName>
        <fullName>Nuclear receptor subfamily 2 group B member 4</fullName>
    </alternativeName>
    <alternativeName>
        <fullName>XR2C</fullName>
    </alternativeName>
</protein>
<dbReference type="EMBL" id="X53417">
    <property type="protein sequence ID" value="CAA37496.1"/>
    <property type="molecule type" value="mRNA"/>
</dbReference>
<dbReference type="EMBL" id="X52591">
    <property type="protein sequence ID" value="CAA36827.1"/>
    <property type="molecule type" value="mRNA"/>
</dbReference>
<dbReference type="EMBL" id="AE014298">
    <property type="protein sequence ID" value="AAF45707.1"/>
    <property type="molecule type" value="Genomic_DNA"/>
</dbReference>
<dbReference type="EMBL" id="AL031765">
    <property type="protein sequence ID" value="CAA21122.1"/>
    <property type="molecule type" value="Genomic_DNA"/>
</dbReference>
<dbReference type="EMBL" id="AY069393">
    <property type="protein sequence ID" value="AAL39538.1"/>
    <property type="molecule type" value="mRNA"/>
</dbReference>
<dbReference type="EMBL" id="X53379">
    <property type="protein sequence ID" value="CAA37459.1"/>
    <property type="molecule type" value="mRNA"/>
</dbReference>
<dbReference type="PIR" id="A35872">
    <property type="entry name" value="A35872"/>
</dbReference>
<dbReference type="PIR" id="T13737">
    <property type="entry name" value="T13737"/>
</dbReference>
<dbReference type="RefSeq" id="NP_001259168.1">
    <property type="nucleotide sequence ID" value="NM_001272239.2"/>
</dbReference>
<dbReference type="RefSeq" id="NP_476781.1">
    <property type="nucleotide sequence ID" value="NM_057433.4"/>
</dbReference>
<dbReference type="PDB" id="1HG4">
    <property type="method" value="X-ray"/>
    <property type="resolution" value="2.40 A"/>
    <property type="chains" value="A/B/C/D/E/F=230-508"/>
</dbReference>
<dbReference type="PDB" id="1R0O">
    <property type="method" value="X-ray"/>
    <property type="resolution" value="2.24 A"/>
    <property type="chains" value="A=94-179"/>
</dbReference>
<dbReference type="PDB" id="2HAN">
    <property type="method" value="X-ray"/>
    <property type="resolution" value="1.95 A"/>
    <property type="chains" value="A=94-179"/>
</dbReference>
<dbReference type="PDBsum" id="1HG4"/>
<dbReference type="PDBsum" id="1R0O"/>
<dbReference type="PDBsum" id="2HAN"/>
<dbReference type="SMR" id="P20153"/>
<dbReference type="BioGRID" id="57709">
    <property type="interactions" value="35"/>
</dbReference>
<dbReference type="DIP" id="DIP-645N"/>
<dbReference type="FunCoup" id="P20153">
    <property type="interactions" value="1180"/>
</dbReference>
<dbReference type="IntAct" id="P20153">
    <property type="interactions" value="3"/>
</dbReference>
<dbReference type="STRING" id="7227.FBpp0305937"/>
<dbReference type="BindingDB" id="P20153"/>
<dbReference type="ChEMBL" id="CHEMBL2366581"/>
<dbReference type="iPTMnet" id="P20153"/>
<dbReference type="PaxDb" id="7227-FBpp0305937"/>
<dbReference type="EnsemblMetazoa" id="FBtr0070346">
    <property type="protein sequence ID" value="FBpp0070332"/>
    <property type="gene ID" value="FBgn0003964"/>
</dbReference>
<dbReference type="EnsemblMetazoa" id="FBtr0333803">
    <property type="protein sequence ID" value="FBpp0305937"/>
    <property type="gene ID" value="FBgn0003964"/>
</dbReference>
<dbReference type="GeneID" id="31165"/>
<dbReference type="KEGG" id="dme:Dmel_CG4380"/>
<dbReference type="AGR" id="FB:FBgn0003964"/>
<dbReference type="CTD" id="31165"/>
<dbReference type="FlyBase" id="FBgn0003964">
    <property type="gene designation" value="usp"/>
</dbReference>
<dbReference type="VEuPathDB" id="VectorBase:FBgn0003964"/>
<dbReference type="eggNOG" id="KOG3575">
    <property type="taxonomic scope" value="Eukaryota"/>
</dbReference>
<dbReference type="GeneTree" id="ENSGT00940000170897"/>
<dbReference type="HOGENOM" id="CLU_007368_5_0_1"/>
<dbReference type="InParanoid" id="P20153"/>
<dbReference type="OMA" id="DEHCRQE"/>
<dbReference type="OrthoDB" id="5873264at2759"/>
<dbReference type="PhylomeDB" id="P20153"/>
<dbReference type="Reactome" id="R-DME-159418">
    <property type="pathway name" value="Recycling of bile acids and salts"/>
</dbReference>
<dbReference type="Reactome" id="R-DME-200425">
    <property type="pathway name" value="Carnitine shuttle"/>
</dbReference>
<dbReference type="Reactome" id="R-DME-381340">
    <property type="pathway name" value="Transcriptional regulation of white adipocyte differentiation"/>
</dbReference>
<dbReference type="Reactome" id="R-DME-383280">
    <property type="pathway name" value="Nuclear Receptor transcription pathway"/>
</dbReference>
<dbReference type="Reactome" id="R-DME-400206">
    <property type="pathway name" value="Regulation of lipid metabolism by PPARalpha"/>
</dbReference>
<dbReference type="Reactome" id="R-DME-5362517">
    <property type="pathway name" value="Signaling by Retinoic Acid"/>
</dbReference>
<dbReference type="Reactome" id="R-DME-9029569">
    <property type="pathway name" value="NR1H3 &amp; NR1H2 regulate gene expression linked to cholesterol transport and efflux"/>
</dbReference>
<dbReference type="Reactome" id="R-DME-9616222">
    <property type="pathway name" value="Transcriptional regulation of granulopoiesis"/>
</dbReference>
<dbReference type="Reactome" id="R-DME-9623433">
    <property type="pathway name" value="NR1H2 &amp; NR1H3 regulate gene expression to control bile acid homeostasis"/>
</dbReference>
<dbReference type="Reactome" id="R-DME-9707564">
    <property type="pathway name" value="Cytoprotection by HMOX1"/>
</dbReference>
<dbReference type="Reactome" id="R-DME-9841922">
    <property type="pathway name" value="MLL4 and MLL3 complexes regulate expression of PPARG target genes in adipogenesis and hepatic steatosis"/>
</dbReference>
<dbReference type="SignaLink" id="P20153"/>
<dbReference type="BioGRID-ORCS" id="31165">
    <property type="hits" value="0 hits in 3 CRISPR screens"/>
</dbReference>
<dbReference type="EvolutionaryTrace" id="P20153"/>
<dbReference type="GenomeRNAi" id="31165"/>
<dbReference type="PRO" id="PR:P20153"/>
<dbReference type="Proteomes" id="UP000000803">
    <property type="component" value="Chromosome X"/>
</dbReference>
<dbReference type="Bgee" id="FBgn0003964">
    <property type="expression patterns" value="Expressed in cleaving embryo and 176 other cell types or tissues"/>
</dbReference>
<dbReference type="ExpressionAtlas" id="P20153">
    <property type="expression patterns" value="baseline and differential"/>
</dbReference>
<dbReference type="GO" id="GO:0008232">
    <property type="term" value="C:activator ecdysone receptor complex"/>
    <property type="evidence" value="ECO:0000314"/>
    <property type="project" value="FlyBase"/>
</dbReference>
<dbReference type="GO" id="GO:0030425">
    <property type="term" value="C:dendrite"/>
    <property type="evidence" value="ECO:0000315"/>
    <property type="project" value="FlyBase"/>
</dbReference>
<dbReference type="GO" id="GO:0008230">
    <property type="term" value="C:ecdysone receptor holocomplex"/>
    <property type="evidence" value="ECO:0000315"/>
    <property type="project" value="CAFA"/>
</dbReference>
<dbReference type="GO" id="GO:0005634">
    <property type="term" value="C:nucleus"/>
    <property type="evidence" value="ECO:0000314"/>
    <property type="project" value="FlyBase"/>
</dbReference>
<dbReference type="GO" id="GO:0005700">
    <property type="term" value="C:polytene chromosome"/>
    <property type="evidence" value="ECO:0000303"/>
    <property type="project" value="FlyBase"/>
</dbReference>
<dbReference type="GO" id="GO:0001046">
    <property type="term" value="F:core promoter sequence-specific DNA binding"/>
    <property type="evidence" value="ECO:0000315"/>
    <property type="project" value="CAFA"/>
</dbReference>
<dbReference type="GO" id="GO:0003677">
    <property type="term" value="F:DNA binding"/>
    <property type="evidence" value="ECO:0000314"/>
    <property type="project" value="FlyBase"/>
</dbReference>
<dbReference type="GO" id="GO:0042562">
    <property type="term" value="F:hormone binding"/>
    <property type="evidence" value="ECO:0000314"/>
    <property type="project" value="FlyBase"/>
</dbReference>
<dbReference type="GO" id="GO:0008289">
    <property type="term" value="F:lipid binding"/>
    <property type="evidence" value="ECO:0000314"/>
    <property type="project" value="FlyBase"/>
</dbReference>
<dbReference type="GO" id="GO:0004879">
    <property type="term" value="F:nuclear receptor activity"/>
    <property type="evidence" value="ECO:0000314"/>
    <property type="project" value="FlyBase"/>
</dbReference>
<dbReference type="GO" id="GO:0003707">
    <property type="term" value="F:nuclear steroid receptor activity"/>
    <property type="evidence" value="ECO:0007669"/>
    <property type="project" value="InterPro"/>
</dbReference>
<dbReference type="GO" id="GO:0046982">
    <property type="term" value="F:protein heterodimerization activity"/>
    <property type="evidence" value="ECO:0000315"/>
    <property type="project" value="CAFA"/>
</dbReference>
<dbReference type="GO" id="GO:0000978">
    <property type="term" value="F:RNA polymerase II cis-regulatory region sequence-specific DNA binding"/>
    <property type="evidence" value="ECO:0000318"/>
    <property type="project" value="GO_Central"/>
</dbReference>
<dbReference type="GO" id="GO:0005102">
    <property type="term" value="F:signaling receptor binding"/>
    <property type="evidence" value="ECO:0000353"/>
    <property type="project" value="CAFA"/>
</dbReference>
<dbReference type="GO" id="GO:0000976">
    <property type="term" value="F:transcription cis-regulatory region binding"/>
    <property type="evidence" value="ECO:0000314"/>
    <property type="project" value="FlyBase"/>
</dbReference>
<dbReference type="GO" id="GO:0008270">
    <property type="term" value="F:zinc ion binding"/>
    <property type="evidence" value="ECO:0007669"/>
    <property type="project" value="UniProtKB-KW"/>
</dbReference>
<dbReference type="GO" id="GO:0007298">
    <property type="term" value="P:border follicle cell migration"/>
    <property type="evidence" value="ECO:0000315"/>
    <property type="project" value="FlyBase"/>
</dbReference>
<dbReference type="GO" id="GO:0030154">
    <property type="term" value="P:cell differentiation"/>
    <property type="evidence" value="ECO:0000318"/>
    <property type="project" value="GO_Central"/>
</dbReference>
<dbReference type="GO" id="GO:0071390">
    <property type="term" value="P:cellular response to ecdysone"/>
    <property type="evidence" value="ECO:0000314"/>
    <property type="project" value="FlyBase"/>
</dbReference>
<dbReference type="GO" id="GO:0048813">
    <property type="term" value="P:dendrite morphogenesis"/>
    <property type="evidence" value="ECO:0000303"/>
    <property type="project" value="FlyBase"/>
</dbReference>
<dbReference type="GO" id="GO:0006697">
    <property type="term" value="P:ecdysone biosynthetic process"/>
    <property type="evidence" value="ECO:0000315"/>
    <property type="project" value="FlyBase"/>
</dbReference>
<dbReference type="GO" id="GO:0035076">
    <property type="term" value="P:ecdysone receptor signaling pathway"/>
    <property type="evidence" value="ECO:0000314"/>
    <property type="project" value="FlyBase"/>
</dbReference>
<dbReference type="GO" id="GO:0007281">
    <property type="term" value="P:germ cell development"/>
    <property type="evidence" value="ECO:0000315"/>
    <property type="project" value="FlyBase"/>
</dbReference>
<dbReference type="GO" id="GO:0007552">
    <property type="term" value="P:metamorphosis"/>
    <property type="evidence" value="ECO:0000315"/>
    <property type="project" value="CACAO"/>
</dbReference>
<dbReference type="GO" id="GO:0016319">
    <property type="term" value="P:mushroom body development"/>
    <property type="evidence" value="ECO:0000315"/>
    <property type="project" value="FlyBase"/>
</dbReference>
<dbReference type="GO" id="GO:0045596">
    <property type="term" value="P:negative regulation of cell differentiation"/>
    <property type="evidence" value="ECO:0000304"/>
    <property type="project" value="FlyBase"/>
</dbReference>
<dbReference type="GO" id="GO:0045892">
    <property type="term" value="P:negative regulation of DNA-templated transcription"/>
    <property type="evidence" value="ECO:0000304"/>
    <property type="project" value="FlyBase"/>
</dbReference>
<dbReference type="GO" id="GO:0007399">
    <property type="term" value="P:nervous system development"/>
    <property type="evidence" value="ECO:0000318"/>
    <property type="project" value="GO_Central"/>
</dbReference>
<dbReference type="GO" id="GO:0016322">
    <property type="term" value="P:neuron remodeling"/>
    <property type="evidence" value="ECO:0000315"/>
    <property type="project" value="FlyBase"/>
</dbReference>
<dbReference type="GO" id="GO:0045893">
    <property type="term" value="P:positive regulation of DNA-templated transcription"/>
    <property type="evidence" value="ECO:0000315"/>
    <property type="project" value="FlyBase"/>
</dbReference>
<dbReference type="GO" id="GO:0045944">
    <property type="term" value="P:positive regulation of transcription by RNA polymerase II"/>
    <property type="evidence" value="ECO:0000318"/>
    <property type="project" value="GO_Central"/>
</dbReference>
<dbReference type="GO" id="GO:0035073">
    <property type="term" value="P:pupariation"/>
    <property type="evidence" value="ECO:0000315"/>
    <property type="project" value="FlyBase"/>
</dbReference>
<dbReference type="GO" id="GO:0040034">
    <property type="term" value="P:regulation of development, heterochronic"/>
    <property type="evidence" value="ECO:0000304"/>
    <property type="project" value="FlyBase"/>
</dbReference>
<dbReference type="GO" id="GO:0046620">
    <property type="term" value="P:regulation of organ growth"/>
    <property type="evidence" value="ECO:0000315"/>
    <property type="project" value="FlyBase"/>
</dbReference>
<dbReference type="GO" id="GO:0035075">
    <property type="term" value="P:response to ecdysone"/>
    <property type="evidence" value="ECO:0000315"/>
    <property type="project" value="FlyBase"/>
</dbReference>
<dbReference type="GO" id="GO:0042594">
    <property type="term" value="P:response to starvation"/>
    <property type="evidence" value="ECO:0000315"/>
    <property type="project" value="FlyBase"/>
</dbReference>
<dbReference type="GO" id="GO:0048384">
    <property type="term" value="P:retinoic acid receptor signaling pathway"/>
    <property type="evidence" value="ECO:0000318"/>
    <property type="project" value="GO_Central"/>
</dbReference>
<dbReference type="CDD" id="cd06956">
    <property type="entry name" value="NR_DBD_RXR"/>
    <property type="match status" value="1"/>
</dbReference>
<dbReference type="CDD" id="cd06943">
    <property type="entry name" value="NR_LBD_RXR_like"/>
    <property type="match status" value="1"/>
</dbReference>
<dbReference type="FunFam" id="3.30.50.10:FF:000005">
    <property type="entry name" value="Retinoic acid receptor RXR-alpha"/>
    <property type="match status" value="1"/>
</dbReference>
<dbReference type="FunFam" id="1.10.565.10:FF:000047">
    <property type="entry name" value="Ultraspiracle, isoform B"/>
    <property type="match status" value="1"/>
</dbReference>
<dbReference type="Gene3D" id="3.30.50.10">
    <property type="entry name" value="Erythroid Transcription Factor GATA-1, subunit A"/>
    <property type="match status" value="1"/>
</dbReference>
<dbReference type="Gene3D" id="1.10.565.10">
    <property type="entry name" value="Retinoid X Receptor"/>
    <property type="match status" value="1"/>
</dbReference>
<dbReference type="IDEAL" id="IID50250"/>
<dbReference type="InterPro" id="IPR035500">
    <property type="entry name" value="NHR-like_dom_sf"/>
</dbReference>
<dbReference type="InterPro" id="IPR000536">
    <property type="entry name" value="Nucl_hrmn_rcpt_lig-bd"/>
</dbReference>
<dbReference type="InterPro" id="IPR050274">
    <property type="entry name" value="Nuclear_hormone_rcpt_NR2"/>
</dbReference>
<dbReference type="InterPro" id="IPR001723">
    <property type="entry name" value="Nuclear_hrmn_rcpt"/>
</dbReference>
<dbReference type="InterPro" id="IPR000003">
    <property type="entry name" value="Retinoid-X_rcpt/HNF4"/>
</dbReference>
<dbReference type="InterPro" id="IPR001628">
    <property type="entry name" value="Znf_hrmn_rcpt"/>
</dbReference>
<dbReference type="InterPro" id="IPR013088">
    <property type="entry name" value="Znf_NHR/GATA"/>
</dbReference>
<dbReference type="PANTHER" id="PTHR24083">
    <property type="entry name" value="NUCLEAR HORMONE RECEPTOR"/>
    <property type="match status" value="1"/>
</dbReference>
<dbReference type="Pfam" id="PF00104">
    <property type="entry name" value="Hormone_recep"/>
    <property type="match status" value="1"/>
</dbReference>
<dbReference type="Pfam" id="PF00105">
    <property type="entry name" value="zf-C4"/>
    <property type="match status" value="1"/>
</dbReference>
<dbReference type="PRINTS" id="PR00545">
    <property type="entry name" value="RETINOIDXR"/>
</dbReference>
<dbReference type="PRINTS" id="PR00398">
    <property type="entry name" value="STRDHORMONER"/>
</dbReference>
<dbReference type="PRINTS" id="PR00047">
    <property type="entry name" value="STROIDFINGER"/>
</dbReference>
<dbReference type="SMART" id="SM00430">
    <property type="entry name" value="HOLI"/>
    <property type="match status" value="1"/>
</dbReference>
<dbReference type="SMART" id="SM00399">
    <property type="entry name" value="ZnF_C4"/>
    <property type="match status" value="1"/>
</dbReference>
<dbReference type="SUPFAM" id="SSF57716">
    <property type="entry name" value="Glucocorticoid receptor-like (DNA-binding domain)"/>
    <property type="match status" value="1"/>
</dbReference>
<dbReference type="SUPFAM" id="SSF48508">
    <property type="entry name" value="Nuclear receptor ligand-binding domain"/>
    <property type="match status" value="1"/>
</dbReference>
<dbReference type="PROSITE" id="PS51843">
    <property type="entry name" value="NR_LBD"/>
    <property type="match status" value="1"/>
</dbReference>
<dbReference type="PROSITE" id="PS00031">
    <property type="entry name" value="NUCLEAR_REC_DBD_1"/>
    <property type="match status" value="1"/>
</dbReference>
<dbReference type="PROSITE" id="PS51030">
    <property type="entry name" value="NUCLEAR_REC_DBD_2"/>
    <property type="match status" value="1"/>
</dbReference>
<accession>P20153</accession>
<accession>Q9W535</accession>
<organism>
    <name type="scientific">Drosophila melanogaster</name>
    <name type="common">Fruit fly</name>
    <dbReference type="NCBI Taxonomy" id="7227"/>
    <lineage>
        <taxon>Eukaryota</taxon>
        <taxon>Metazoa</taxon>
        <taxon>Ecdysozoa</taxon>
        <taxon>Arthropoda</taxon>
        <taxon>Hexapoda</taxon>
        <taxon>Insecta</taxon>
        <taxon>Pterygota</taxon>
        <taxon>Neoptera</taxon>
        <taxon>Endopterygota</taxon>
        <taxon>Diptera</taxon>
        <taxon>Brachycera</taxon>
        <taxon>Muscomorpha</taxon>
        <taxon>Ephydroidea</taxon>
        <taxon>Drosophilidae</taxon>
        <taxon>Drosophila</taxon>
        <taxon>Sophophora</taxon>
    </lineage>
</organism>
<reference key="1">
    <citation type="journal article" date="1990" name="Nature">
        <title>Relationship between the product of the Drosophila ultraspiracle locus and the vertebrate retinoid X receptor.</title>
        <authorList>
            <person name="Oro A.E."/>
            <person name="McKeown M."/>
            <person name="Evans R.M."/>
        </authorList>
    </citation>
    <scope>NUCLEOTIDE SEQUENCE [MRNA]</scope>
    <source>
        <tissue>Larva</tissue>
    </source>
</reference>
<reference key="2">
    <citation type="journal article" date="1990" name="Nucleic Acids Res.">
        <title>A steroid/thyroid hormone receptor superfamily member in Drosophila melanogaster that shares extensive sequence similarity with a mammalian homologue.</title>
        <authorList>
            <person name="Henrich V.C."/>
            <person name="Sliter T.J."/>
            <person name="Lubahn D.B."/>
            <person name="Macintyre A."/>
            <person name="Gilbert L.I."/>
        </authorList>
    </citation>
    <scope>NUCLEOTIDE SEQUENCE [MRNA]</scope>
    <source>
        <strain>Canton-S</strain>
    </source>
</reference>
<reference key="3">
    <citation type="journal article" date="2000" name="Science">
        <title>The genome sequence of Drosophila melanogaster.</title>
        <authorList>
            <person name="Adams M.D."/>
            <person name="Celniker S.E."/>
            <person name="Holt R.A."/>
            <person name="Evans C.A."/>
            <person name="Gocayne J.D."/>
            <person name="Amanatides P.G."/>
            <person name="Scherer S.E."/>
            <person name="Li P.W."/>
            <person name="Hoskins R.A."/>
            <person name="Galle R.F."/>
            <person name="George R.A."/>
            <person name="Lewis S.E."/>
            <person name="Richards S."/>
            <person name="Ashburner M."/>
            <person name="Henderson S.N."/>
            <person name="Sutton G.G."/>
            <person name="Wortman J.R."/>
            <person name="Yandell M.D."/>
            <person name="Zhang Q."/>
            <person name="Chen L.X."/>
            <person name="Brandon R.C."/>
            <person name="Rogers Y.-H.C."/>
            <person name="Blazej R.G."/>
            <person name="Champe M."/>
            <person name="Pfeiffer B.D."/>
            <person name="Wan K.H."/>
            <person name="Doyle C."/>
            <person name="Baxter E.G."/>
            <person name="Helt G."/>
            <person name="Nelson C.R."/>
            <person name="Miklos G.L.G."/>
            <person name="Abril J.F."/>
            <person name="Agbayani A."/>
            <person name="An H.-J."/>
            <person name="Andrews-Pfannkoch C."/>
            <person name="Baldwin D."/>
            <person name="Ballew R.M."/>
            <person name="Basu A."/>
            <person name="Baxendale J."/>
            <person name="Bayraktaroglu L."/>
            <person name="Beasley E.M."/>
            <person name="Beeson K.Y."/>
            <person name="Benos P.V."/>
            <person name="Berman B.P."/>
            <person name="Bhandari D."/>
            <person name="Bolshakov S."/>
            <person name="Borkova D."/>
            <person name="Botchan M.R."/>
            <person name="Bouck J."/>
            <person name="Brokstein P."/>
            <person name="Brottier P."/>
            <person name="Burtis K.C."/>
            <person name="Busam D.A."/>
            <person name="Butler H."/>
            <person name="Cadieu E."/>
            <person name="Center A."/>
            <person name="Chandra I."/>
            <person name="Cherry J.M."/>
            <person name="Cawley S."/>
            <person name="Dahlke C."/>
            <person name="Davenport L.B."/>
            <person name="Davies P."/>
            <person name="de Pablos B."/>
            <person name="Delcher A."/>
            <person name="Deng Z."/>
            <person name="Mays A.D."/>
            <person name="Dew I."/>
            <person name="Dietz S.M."/>
            <person name="Dodson K."/>
            <person name="Doup L.E."/>
            <person name="Downes M."/>
            <person name="Dugan-Rocha S."/>
            <person name="Dunkov B.C."/>
            <person name="Dunn P."/>
            <person name="Durbin K.J."/>
            <person name="Evangelista C.C."/>
            <person name="Ferraz C."/>
            <person name="Ferriera S."/>
            <person name="Fleischmann W."/>
            <person name="Fosler C."/>
            <person name="Gabrielian A.E."/>
            <person name="Garg N.S."/>
            <person name="Gelbart W.M."/>
            <person name="Glasser K."/>
            <person name="Glodek A."/>
            <person name="Gong F."/>
            <person name="Gorrell J.H."/>
            <person name="Gu Z."/>
            <person name="Guan P."/>
            <person name="Harris M."/>
            <person name="Harris N.L."/>
            <person name="Harvey D.A."/>
            <person name="Heiman T.J."/>
            <person name="Hernandez J.R."/>
            <person name="Houck J."/>
            <person name="Hostin D."/>
            <person name="Houston K.A."/>
            <person name="Howland T.J."/>
            <person name="Wei M.-H."/>
            <person name="Ibegwam C."/>
            <person name="Jalali M."/>
            <person name="Kalush F."/>
            <person name="Karpen G.H."/>
            <person name="Ke Z."/>
            <person name="Kennison J.A."/>
            <person name="Ketchum K.A."/>
            <person name="Kimmel B.E."/>
            <person name="Kodira C.D."/>
            <person name="Kraft C.L."/>
            <person name="Kravitz S."/>
            <person name="Kulp D."/>
            <person name="Lai Z."/>
            <person name="Lasko P."/>
            <person name="Lei Y."/>
            <person name="Levitsky A.A."/>
            <person name="Li J.H."/>
            <person name="Li Z."/>
            <person name="Liang Y."/>
            <person name="Lin X."/>
            <person name="Liu X."/>
            <person name="Mattei B."/>
            <person name="McIntosh T.C."/>
            <person name="McLeod M.P."/>
            <person name="McPherson D."/>
            <person name="Merkulov G."/>
            <person name="Milshina N.V."/>
            <person name="Mobarry C."/>
            <person name="Morris J."/>
            <person name="Moshrefi A."/>
            <person name="Mount S.M."/>
            <person name="Moy M."/>
            <person name="Murphy B."/>
            <person name="Murphy L."/>
            <person name="Muzny D.M."/>
            <person name="Nelson D.L."/>
            <person name="Nelson D.R."/>
            <person name="Nelson K.A."/>
            <person name="Nixon K."/>
            <person name="Nusskern D.R."/>
            <person name="Pacleb J.M."/>
            <person name="Palazzolo M."/>
            <person name="Pittman G.S."/>
            <person name="Pan S."/>
            <person name="Pollard J."/>
            <person name="Puri V."/>
            <person name="Reese M.G."/>
            <person name="Reinert K."/>
            <person name="Remington K."/>
            <person name="Saunders R.D.C."/>
            <person name="Scheeler F."/>
            <person name="Shen H."/>
            <person name="Shue B.C."/>
            <person name="Siden-Kiamos I."/>
            <person name="Simpson M."/>
            <person name="Skupski M.P."/>
            <person name="Smith T.J."/>
            <person name="Spier E."/>
            <person name="Spradling A.C."/>
            <person name="Stapleton M."/>
            <person name="Strong R."/>
            <person name="Sun E."/>
            <person name="Svirskas R."/>
            <person name="Tector C."/>
            <person name="Turner R."/>
            <person name="Venter E."/>
            <person name="Wang A.H."/>
            <person name="Wang X."/>
            <person name="Wang Z.-Y."/>
            <person name="Wassarman D.A."/>
            <person name="Weinstock G.M."/>
            <person name="Weissenbach J."/>
            <person name="Williams S.M."/>
            <person name="Woodage T."/>
            <person name="Worley K.C."/>
            <person name="Wu D."/>
            <person name="Yang S."/>
            <person name="Yao Q.A."/>
            <person name="Ye J."/>
            <person name="Yeh R.-F."/>
            <person name="Zaveri J.S."/>
            <person name="Zhan M."/>
            <person name="Zhang G."/>
            <person name="Zhao Q."/>
            <person name="Zheng L."/>
            <person name="Zheng X.H."/>
            <person name="Zhong F.N."/>
            <person name="Zhong W."/>
            <person name="Zhou X."/>
            <person name="Zhu S.C."/>
            <person name="Zhu X."/>
            <person name="Smith H.O."/>
            <person name="Gibbs R.A."/>
            <person name="Myers E.W."/>
            <person name="Rubin G.M."/>
            <person name="Venter J.C."/>
        </authorList>
    </citation>
    <scope>NUCLEOTIDE SEQUENCE [LARGE SCALE GENOMIC DNA]</scope>
    <source>
        <strain>Berkeley</strain>
    </source>
</reference>
<reference key="4">
    <citation type="journal article" date="2002" name="Genome Biol.">
        <title>Annotation of the Drosophila melanogaster euchromatic genome: a systematic review.</title>
        <authorList>
            <person name="Misra S."/>
            <person name="Crosby M.A."/>
            <person name="Mungall C.J."/>
            <person name="Matthews B.B."/>
            <person name="Campbell K.S."/>
            <person name="Hradecky P."/>
            <person name="Huang Y."/>
            <person name="Kaminker J.S."/>
            <person name="Millburn G.H."/>
            <person name="Prochnik S.E."/>
            <person name="Smith C.D."/>
            <person name="Tupy J.L."/>
            <person name="Whitfield E.J."/>
            <person name="Bayraktaroglu L."/>
            <person name="Berman B.P."/>
            <person name="Bettencourt B.R."/>
            <person name="Celniker S.E."/>
            <person name="de Grey A.D.N.J."/>
            <person name="Drysdale R.A."/>
            <person name="Harris N.L."/>
            <person name="Richter J."/>
            <person name="Russo S."/>
            <person name="Schroeder A.J."/>
            <person name="Shu S.Q."/>
            <person name="Stapleton M."/>
            <person name="Yamada C."/>
            <person name="Ashburner M."/>
            <person name="Gelbart W.M."/>
            <person name="Rubin G.M."/>
            <person name="Lewis S.E."/>
        </authorList>
    </citation>
    <scope>GENOME REANNOTATION</scope>
    <source>
        <strain>Berkeley</strain>
    </source>
</reference>
<reference key="5">
    <citation type="journal article" date="2000" name="Science">
        <title>From sequence to chromosome: the tip of the X chromosome of D. melanogaster.</title>
        <authorList>
            <person name="Benos P.V."/>
            <person name="Gatt M.K."/>
            <person name="Ashburner M."/>
            <person name="Murphy L."/>
            <person name="Harris D."/>
            <person name="Barrell B.G."/>
            <person name="Ferraz C."/>
            <person name="Vidal S."/>
            <person name="Brun C."/>
            <person name="Demailles J."/>
            <person name="Cadieu E."/>
            <person name="Dreano S."/>
            <person name="Gloux S."/>
            <person name="Lelaure V."/>
            <person name="Mottier S."/>
            <person name="Galibert F."/>
            <person name="Borkova D."/>
            <person name="Minana B."/>
            <person name="Kafatos F.C."/>
            <person name="Louis C."/>
            <person name="Siden-Kiamos I."/>
            <person name="Bolshakov S."/>
            <person name="Papagiannakis G."/>
            <person name="Spanos L."/>
            <person name="Cox S."/>
            <person name="Madueno E."/>
            <person name="de Pablos B."/>
            <person name="Modolell J."/>
            <person name="Peter A."/>
            <person name="Schoettler P."/>
            <person name="Werner M."/>
            <person name="Mourkioti F."/>
            <person name="Beinert N."/>
            <person name="Dowe G."/>
            <person name="Schaefer U."/>
            <person name="Jaeckle H."/>
            <person name="Bucheton A."/>
            <person name="Callister D.M."/>
            <person name="Campbell L.A."/>
            <person name="Darlamitsou A."/>
            <person name="Henderson N.S."/>
            <person name="McMillan P.J."/>
            <person name="Salles C."/>
            <person name="Tait E.A."/>
            <person name="Valenti P."/>
            <person name="Saunders R.D.C."/>
            <person name="Glover D.M."/>
        </authorList>
    </citation>
    <scope>NUCLEOTIDE SEQUENCE [LARGE SCALE GENOMIC DNA]</scope>
    <source>
        <strain>Oregon-R</strain>
    </source>
</reference>
<reference key="6">
    <citation type="journal article" date="2002" name="Genome Biol.">
        <title>A Drosophila full-length cDNA resource.</title>
        <authorList>
            <person name="Stapleton M."/>
            <person name="Carlson J.W."/>
            <person name="Brokstein P."/>
            <person name="Yu C."/>
            <person name="Champe M."/>
            <person name="George R.A."/>
            <person name="Guarin H."/>
            <person name="Kronmiller B."/>
            <person name="Pacleb J.M."/>
            <person name="Park S."/>
            <person name="Wan K.H."/>
            <person name="Rubin G.M."/>
            <person name="Celniker S.E."/>
        </authorList>
    </citation>
    <scope>NUCLEOTIDE SEQUENCE [LARGE SCALE MRNA]</scope>
    <source>
        <strain>Berkeley</strain>
        <tissue>Embryo</tissue>
    </source>
</reference>
<reference key="7">
    <citation type="journal article" date="1990" name="Genes Dev.">
        <title>Proteins that bind to Drosophila chorion cis-regulatory elements: a new C2H2 zinc finger protein and a C2C2 steroid receptor-like component.</title>
        <authorList>
            <person name="Shea M.J."/>
            <person name="King D.L."/>
            <person name="Conboy M.J."/>
            <person name="Mariani B.D."/>
            <person name="Kafatos F.C."/>
        </authorList>
    </citation>
    <scope>NUCLEOTIDE SEQUENCE [MRNA] OF 15-294</scope>
    <source>
        <tissue>Ovary</tissue>
    </source>
</reference>
<reference key="8">
    <citation type="journal article" date="1993" name="Nature">
        <title>Functional ecdysone receptor is the product of EcR and Ultraspiracle genes.</title>
        <authorList>
            <person name="Yao T.-P."/>
            <person name="Froman B.M."/>
            <person name="Jiang Z."/>
            <person name="Cherbas L."/>
            <person name="Chen J.-D."/>
            <person name="McKeown M.M."/>
            <person name="Cherbas P."/>
            <person name="Evans R.M."/>
        </authorList>
    </citation>
    <scope>SUBUNIT</scope>
</reference>
<reference key="9">
    <citation type="journal article" date="2008" name="J. Proteome Res.">
        <title>Phosphoproteome analysis of Drosophila melanogaster embryos.</title>
        <authorList>
            <person name="Zhai B."/>
            <person name="Villen J."/>
            <person name="Beausoleil S.A."/>
            <person name="Mintseris J."/>
            <person name="Gygi S.P."/>
        </authorList>
    </citation>
    <scope>PHOSPHORYLATION [LARGE SCALE ANALYSIS] AT SER-35</scope>
    <scope>IDENTIFICATION BY MASS SPECTROMETRY</scope>
    <source>
        <tissue>Embryo</tissue>
    </source>
</reference>
<name>USP_DROME</name>
<feature type="chain" id="PRO_0000053582" description="Protein ultraspiracle">
    <location>
        <begin position="1"/>
        <end position="508"/>
    </location>
</feature>
<feature type="domain" description="NR LBD" evidence="3">
    <location>
        <begin position="239"/>
        <end position="498"/>
    </location>
</feature>
<feature type="DNA-binding region" description="Nuclear receptor" evidence="2">
    <location>
        <begin position="104"/>
        <end position="169"/>
    </location>
</feature>
<feature type="zinc finger region" description="NR C4-type" evidence="2">
    <location>
        <begin position="104"/>
        <end position="124"/>
    </location>
</feature>
<feature type="zinc finger region" description="NR C4-type" evidence="2">
    <location>
        <begin position="140"/>
        <end position="164"/>
    </location>
</feature>
<feature type="region of interest" description="Modulating" evidence="1">
    <location>
        <begin position="1"/>
        <end position="103"/>
    </location>
</feature>
<feature type="region of interest" description="Disordered" evidence="4">
    <location>
        <begin position="21"/>
        <end position="40"/>
    </location>
</feature>
<feature type="region of interest" description="Disordered" evidence="4">
    <location>
        <begin position="55"/>
        <end position="92"/>
    </location>
</feature>
<feature type="region of interest" description="Hinge">
    <location>
        <begin position="170"/>
        <end position="223"/>
    </location>
</feature>
<feature type="region of interest" description="Disordered" evidence="4">
    <location>
        <begin position="178"/>
        <end position="228"/>
    </location>
</feature>
<feature type="compositionally biased region" description="Polar residues" evidence="4">
    <location>
        <begin position="24"/>
        <end position="35"/>
    </location>
</feature>
<feature type="compositionally biased region" description="Low complexity" evidence="4">
    <location>
        <begin position="57"/>
        <end position="90"/>
    </location>
</feature>
<feature type="compositionally biased region" description="Gly residues" evidence="4">
    <location>
        <begin position="192"/>
        <end position="224"/>
    </location>
</feature>
<feature type="modified residue" description="Phosphoserine" evidence="5">
    <location>
        <position position="35"/>
    </location>
</feature>
<feature type="sequence conflict" description="In Ref. 2; CAA36827." evidence="7" ref="2">
    <original>G</original>
    <variation>E</variation>
    <location>
        <position position="213"/>
    </location>
</feature>
<feature type="sequence conflict" description="In Ref. 2; CAA36827." evidence="7" ref="2">
    <location>
        <position position="339"/>
    </location>
</feature>
<feature type="turn" evidence="9">
    <location>
        <begin position="105"/>
        <end position="107"/>
    </location>
</feature>
<feature type="strand" evidence="9">
    <location>
        <begin position="113"/>
        <end position="115"/>
    </location>
</feature>
<feature type="strand" evidence="9">
    <location>
        <begin position="118"/>
        <end position="120"/>
    </location>
</feature>
<feature type="helix" evidence="9">
    <location>
        <begin position="122"/>
        <end position="134"/>
    </location>
</feature>
<feature type="turn" evidence="9">
    <location>
        <begin position="150"/>
        <end position="152"/>
    </location>
</feature>
<feature type="helix" evidence="9">
    <location>
        <begin position="153"/>
        <end position="155"/>
    </location>
</feature>
<feature type="helix" evidence="9">
    <location>
        <begin position="157"/>
        <end position="167"/>
    </location>
</feature>
<feature type="helix" evidence="9">
    <location>
        <begin position="171"/>
        <end position="173"/>
    </location>
</feature>
<feature type="helix" evidence="8">
    <location>
        <begin position="240"/>
        <end position="253"/>
    </location>
</feature>
<feature type="helix" evidence="8">
    <location>
        <begin position="272"/>
        <end position="274"/>
    </location>
</feature>
<feature type="helix" evidence="8">
    <location>
        <begin position="275"/>
        <end position="297"/>
    </location>
</feature>
<feature type="helix" evidence="8">
    <location>
        <begin position="302"/>
        <end position="304"/>
    </location>
</feature>
<feature type="helix" evidence="8">
    <location>
        <begin position="307"/>
        <end position="329"/>
    </location>
</feature>
<feature type="turn" evidence="8">
    <location>
        <begin position="330"/>
        <end position="333"/>
    </location>
</feature>
<feature type="strand" evidence="8">
    <location>
        <begin position="363"/>
        <end position="369"/>
    </location>
</feature>
<feature type="strand" evidence="8">
    <location>
        <begin position="371"/>
        <end position="373"/>
    </location>
</feature>
<feature type="helix" evidence="8">
    <location>
        <begin position="374"/>
        <end position="380"/>
    </location>
</feature>
<feature type="helix" evidence="8">
    <location>
        <begin position="383"/>
        <end position="392"/>
    </location>
</feature>
<feature type="helix" evidence="8">
    <location>
        <begin position="394"/>
        <end position="400"/>
    </location>
</feature>
<feature type="helix" evidence="8">
    <location>
        <begin position="404"/>
        <end position="415"/>
    </location>
</feature>
<feature type="helix" evidence="8">
    <location>
        <begin position="426"/>
        <end position="447"/>
    </location>
</feature>
<feature type="helix" evidence="8">
    <location>
        <begin position="454"/>
        <end position="479"/>
    </location>
</feature>
<feature type="helix" evidence="8">
    <location>
        <begin position="487"/>
        <end position="495"/>
    </location>
</feature>
<proteinExistence type="evidence at protein level"/>
<comment type="function">
    <text>Receptor for ecdysone. May be an important modulator of insect metamorphosis. Plays an important part in embryonic and post-embryonic development. Binds to ecdysone response elements (ECRES) such as in the promoter region of s15 chorion gene.</text>
</comment>
<comment type="subunit">
    <text evidence="6">Heterodimer of USP and ECR. Only the heterodimer is capable of high-affinity binding to ecdysone.</text>
</comment>
<comment type="subcellular location">
    <subcellularLocation>
        <location>Nucleus</location>
    </subcellularLocation>
</comment>
<comment type="domain">
    <text>Composed of three domains: a modulating N-terminal domain, a DNA-binding domain and a C-terminal ligand-binding domain.</text>
</comment>
<comment type="similarity">
    <text evidence="7">Belongs to the nuclear hormone receptor family. NR2 subfamily.</text>
</comment>
<evidence type="ECO:0000250" key="1"/>
<evidence type="ECO:0000255" key="2">
    <source>
        <dbReference type="PROSITE-ProRule" id="PRU00407"/>
    </source>
</evidence>
<evidence type="ECO:0000255" key="3">
    <source>
        <dbReference type="PROSITE-ProRule" id="PRU01189"/>
    </source>
</evidence>
<evidence type="ECO:0000256" key="4">
    <source>
        <dbReference type="SAM" id="MobiDB-lite"/>
    </source>
</evidence>
<evidence type="ECO:0000269" key="5">
    <source>
    </source>
</evidence>
<evidence type="ECO:0000269" key="6">
    <source>
    </source>
</evidence>
<evidence type="ECO:0000305" key="7"/>
<evidence type="ECO:0007829" key="8">
    <source>
        <dbReference type="PDB" id="1HG4"/>
    </source>
</evidence>
<evidence type="ECO:0007829" key="9">
    <source>
        <dbReference type="PDB" id="2HAN"/>
    </source>
</evidence>
<keyword id="KW-0002">3D-structure</keyword>
<keyword id="KW-0238">DNA-binding</keyword>
<keyword id="KW-0479">Metal-binding</keyword>
<keyword id="KW-0539">Nucleus</keyword>
<keyword id="KW-0597">Phosphoprotein</keyword>
<keyword id="KW-0675">Receptor</keyword>
<keyword id="KW-1185">Reference proteome</keyword>
<keyword id="KW-0804">Transcription</keyword>
<keyword id="KW-0805">Transcription regulation</keyword>
<keyword id="KW-0862">Zinc</keyword>
<keyword id="KW-0863">Zinc-finger</keyword>
<gene>
    <name type="primary">usp</name>
    <name type="synonym">Cf1</name>
    <name type="synonym">NR2B4</name>
    <name type="ORF">CG4380</name>
</gene>